<gene>
    <name evidence="1" type="primary">mscL</name>
    <name type="ordered locus">CT1243</name>
</gene>
<name>MSCL_CHLTE</name>
<organism>
    <name type="scientific">Chlorobaculum tepidum (strain ATCC 49652 / DSM 12025 / NBRC 103806 / TLS)</name>
    <name type="common">Chlorobium tepidum</name>
    <dbReference type="NCBI Taxonomy" id="194439"/>
    <lineage>
        <taxon>Bacteria</taxon>
        <taxon>Pseudomonadati</taxon>
        <taxon>Chlorobiota</taxon>
        <taxon>Chlorobiia</taxon>
        <taxon>Chlorobiales</taxon>
        <taxon>Chlorobiaceae</taxon>
        <taxon>Chlorobaculum</taxon>
    </lineage>
</organism>
<evidence type="ECO:0000255" key="1">
    <source>
        <dbReference type="HAMAP-Rule" id="MF_00115"/>
    </source>
</evidence>
<proteinExistence type="inferred from homology"/>
<feature type="chain" id="PRO_0000237993" description="Large-conductance mechanosensitive channel">
    <location>
        <begin position="1"/>
        <end position="151"/>
    </location>
</feature>
<feature type="transmembrane region" description="Helical" evidence="1">
    <location>
        <begin position="14"/>
        <end position="34"/>
    </location>
</feature>
<feature type="transmembrane region" description="Helical" evidence="1">
    <location>
        <begin position="85"/>
        <end position="105"/>
    </location>
</feature>
<accession>Q8KD14</accession>
<keyword id="KW-0997">Cell inner membrane</keyword>
<keyword id="KW-1003">Cell membrane</keyword>
<keyword id="KW-0407">Ion channel</keyword>
<keyword id="KW-0406">Ion transport</keyword>
<keyword id="KW-0472">Membrane</keyword>
<keyword id="KW-1185">Reference proteome</keyword>
<keyword id="KW-0812">Transmembrane</keyword>
<keyword id="KW-1133">Transmembrane helix</keyword>
<keyword id="KW-0813">Transport</keyword>
<sequence length="151" mass="16057">MLKEFREFALKGNVVDMAVGIIIGGAFGALVNSLVNDLLMPPLGLLLKGVDFSNLFVVLKEGTPPGPYIALADAKTAGAVTLNYGLFVNALIGFLIMAFAVFLLVRSINRLRSLSEKSAAPAVAPQTKECPFCFSIIPLKAVRCPNCTSQL</sequence>
<comment type="function">
    <text evidence="1">Channel that opens in response to stretch forces in the membrane lipid bilayer. May participate in the regulation of osmotic pressure changes within the cell.</text>
</comment>
<comment type="subunit">
    <text evidence="1">Homopentamer.</text>
</comment>
<comment type="subcellular location">
    <subcellularLocation>
        <location evidence="1">Cell inner membrane</location>
        <topology evidence="1">Multi-pass membrane protein</topology>
    </subcellularLocation>
</comment>
<comment type="similarity">
    <text evidence="1">Belongs to the MscL family.</text>
</comment>
<protein>
    <recommendedName>
        <fullName evidence="1">Large-conductance mechanosensitive channel</fullName>
    </recommendedName>
</protein>
<reference key="1">
    <citation type="journal article" date="2002" name="Proc. Natl. Acad. Sci. U.S.A.">
        <title>The complete genome sequence of Chlorobium tepidum TLS, a photosynthetic, anaerobic, green-sulfur bacterium.</title>
        <authorList>
            <person name="Eisen J.A."/>
            <person name="Nelson K.E."/>
            <person name="Paulsen I.T."/>
            <person name="Heidelberg J.F."/>
            <person name="Wu M."/>
            <person name="Dodson R.J."/>
            <person name="DeBoy R.T."/>
            <person name="Gwinn M.L."/>
            <person name="Nelson W.C."/>
            <person name="Haft D.H."/>
            <person name="Hickey E.K."/>
            <person name="Peterson J.D."/>
            <person name="Durkin A.S."/>
            <person name="Kolonay J.F."/>
            <person name="Yang F."/>
            <person name="Holt I.E."/>
            <person name="Umayam L.A."/>
            <person name="Mason T.M."/>
            <person name="Brenner M."/>
            <person name="Shea T.P."/>
            <person name="Parksey D.S."/>
            <person name="Nierman W.C."/>
            <person name="Feldblyum T.V."/>
            <person name="Hansen C.L."/>
            <person name="Craven M.B."/>
            <person name="Radune D."/>
            <person name="Vamathevan J.J."/>
            <person name="Khouri H.M."/>
            <person name="White O."/>
            <person name="Gruber T.M."/>
            <person name="Ketchum K.A."/>
            <person name="Venter J.C."/>
            <person name="Tettelin H."/>
            <person name="Bryant D.A."/>
            <person name="Fraser C.M."/>
        </authorList>
    </citation>
    <scope>NUCLEOTIDE SEQUENCE [LARGE SCALE GENOMIC DNA]</scope>
    <source>
        <strain>ATCC 49652 / DSM 12025 / NBRC 103806 / TLS</strain>
    </source>
</reference>
<dbReference type="EMBL" id="AE006470">
    <property type="protein sequence ID" value="AAM72473.1"/>
    <property type="molecule type" value="Genomic_DNA"/>
</dbReference>
<dbReference type="RefSeq" id="NP_662131.1">
    <property type="nucleotide sequence ID" value="NC_002932.3"/>
</dbReference>
<dbReference type="RefSeq" id="WP_010932912.1">
    <property type="nucleotide sequence ID" value="NC_002932.3"/>
</dbReference>
<dbReference type="STRING" id="194439.CT1243"/>
<dbReference type="EnsemblBacteria" id="AAM72473">
    <property type="protein sequence ID" value="AAM72473"/>
    <property type="gene ID" value="CT1243"/>
</dbReference>
<dbReference type="KEGG" id="cte:CT1243"/>
<dbReference type="PATRIC" id="fig|194439.7.peg.1134"/>
<dbReference type="eggNOG" id="COG1970">
    <property type="taxonomic scope" value="Bacteria"/>
</dbReference>
<dbReference type="HOGENOM" id="CLU_095787_2_3_10"/>
<dbReference type="OrthoDB" id="9810350at2"/>
<dbReference type="Proteomes" id="UP000001007">
    <property type="component" value="Chromosome"/>
</dbReference>
<dbReference type="GO" id="GO:0005886">
    <property type="term" value="C:plasma membrane"/>
    <property type="evidence" value="ECO:0007669"/>
    <property type="project" value="UniProtKB-SubCell"/>
</dbReference>
<dbReference type="GO" id="GO:0008381">
    <property type="term" value="F:mechanosensitive monoatomic ion channel activity"/>
    <property type="evidence" value="ECO:0007669"/>
    <property type="project" value="UniProtKB-UniRule"/>
</dbReference>
<dbReference type="Gene3D" id="1.10.1200.120">
    <property type="entry name" value="Large-conductance mechanosensitive channel, MscL, domain 1"/>
    <property type="match status" value="1"/>
</dbReference>
<dbReference type="HAMAP" id="MF_00115">
    <property type="entry name" value="MscL"/>
    <property type="match status" value="1"/>
</dbReference>
<dbReference type="InterPro" id="IPR019823">
    <property type="entry name" value="Mechanosensitive_channel_CS"/>
</dbReference>
<dbReference type="InterPro" id="IPR001185">
    <property type="entry name" value="MS_channel"/>
</dbReference>
<dbReference type="InterPro" id="IPR037673">
    <property type="entry name" value="MSC/AndL"/>
</dbReference>
<dbReference type="InterPro" id="IPR036019">
    <property type="entry name" value="MscL_channel"/>
</dbReference>
<dbReference type="NCBIfam" id="TIGR00220">
    <property type="entry name" value="mscL"/>
    <property type="match status" value="1"/>
</dbReference>
<dbReference type="NCBIfam" id="NF001843">
    <property type="entry name" value="PRK00567.1-4"/>
    <property type="match status" value="1"/>
</dbReference>
<dbReference type="PANTHER" id="PTHR30266:SF2">
    <property type="entry name" value="LARGE-CONDUCTANCE MECHANOSENSITIVE CHANNEL"/>
    <property type="match status" value="1"/>
</dbReference>
<dbReference type="PANTHER" id="PTHR30266">
    <property type="entry name" value="MECHANOSENSITIVE CHANNEL MSCL"/>
    <property type="match status" value="1"/>
</dbReference>
<dbReference type="Pfam" id="PF01741">
    <property type="entry name" value="MscL"/>
    <property type="match status" value="1"/>
</dbReference>
<dbReference type="PRINTS" id="PR01264">
    <property type="entry name" value="MECHCHANNEL"/>
</dbReference>
<dbReference type="SUPFAM" id="SSF81330">
    <property type="entry name" value="Gated mechanosensitive channel"/>
    <property type="match status" value="1"/>
</dbReference>
<dbReference type="PROSITE" id="PS01327">
    <property type="entry name" value="MSCL"/>
    <property type="match status" value="1"/>
</dbReference>